<name>MTBA_METAC</name>
<keyword id="KW-0479">Metal-binding</keyword>
<keyword id="KW-0484">Methanogenesis</keyword>
<keyword id="KW-0489">Methyltransferase</keyword>
<keyword id="KW-1185">Reference proteome</keyword>
<keyword id="KW-0808">Transferase</keyword>
<keyword id="KW-0862">Zinc</keyword>
<sequence length="339" mass="36821">MTEYTPKERLYRALRKQPVDRMPAVCFTQTATVEQMEASGAYWPEAHADAEKMATLAEAGHTVIGFEAVRVPFDITAEAELFGCGIKAGDLKQQPSVIKHVVKNMEDMEKLKGYSLNEGRVGLILEAIKILSEKYGKELPIIGSMIGPFSLAQHINGDAWFGNLFTGEEIVPALLDFCSDFNVAYAKAMVENGADTIAIIDPTASYELIGGEFYEKYALPYQKKIVDAMKELDVGTVLHICGNTTNGLSIMDKTGVNGISVDQRVDIKTATDNVENAIIIGNLDPVAILWNGTPEDVAEASKKVLDVGVGLLSPGCGIVSMTPSANLQKMVECAKNYKY</sequence>
<evidence type="ECO:0000250" key="1"/>
<evidence type="ECO:0000255" key="2"/>
<evidence type="ECO:0000305" key="3"/>
<feature type="initiator methionine" description="Removed" evidence="1">
    <location>
        <position position="1"/>
    </location>
</feature>
<feature type="chain" id="PRO_0000187668" description="Methylcobamide:CoM methyltransferase MtbA">
    <location>
        <begin position="2"/>
        <end position="339"/>
    </location>
</feature>
<feature type="binding site" evidence="1">
    <location>
        <position position="239"/>
    </location>
    <ligand>
        <name>Zn(2+)</name>
        <dbReference type="ChEBI" id="CHEBI:29105"/>
    </ligand>
</feature>
<feature type="binding site" evidence="1">
    <location>
        <position position="241"/>
    </location>
    <ligand>
        <name>Zn(2+)</name>
        <dbReference type="ChEBI" id="CHEBI:29105"/>
    </ligand>
</feature>
<feature type="binding site" evidence="2">
    <location>
        <position position="316"/>
    </location>
    <ligand>
        <name>Zn(2+)</name>
        <dbReference type="ChEBI" id="CHEBI:29105"/>
    </ligand>
</feature>
<accession>P58869</accession>
<proteinExistence type="inferred from homology"/>
<reference key="1">
    <citation type="journal article" date="2002" name="Genome Res.">
        <title>The genome of Methanosarcina acetivorans reveals extensive metabolic and physiological diversity.</title>
        <authorList>
            <person name="Galagan J.E."/>
            <person name="Nusbaum C."/>
            <person name="Roy A."/>
            <person name="Endrizzi M.G."/>
            <person name="Macdonald P."/>
            <person name="FitzHugh W."/>
            <person name="Calvo S."/>
            <person name="Engels R."/>
            <person name="Smirnov S."/>
            <person name="Atnoor D."/>
            <person name="Brown A."/>
            <person name="Allen N."/>
            <person name="Naylor J."/>
            <person name="Stange-Thomann N."/>
            <person name="DeArellano K."/>
            <person name="Johnson R."/>
            <person name="Linton L."/>
            <person name="McEwan P."/>
            <person name="McKernan K."/>
            <person name="Talamas J."/>
            <person name="Tirrell A."/>
            <person name="Ye W."/>
            <person name="Zimmer A."/>
            <person name="Barber R.D."/>
            <person name="Cann I."/>
            <person name="Graham D.E."/>
            <person name="Grahame D.A."/>
            <person name="Guss A.M."/>
            <person name="Hedderich R."/>
            <person name="Ingram-Smith C."/>
            <person name="Kuettner H.C."/>
            <person name="Krzycki J.A."/>
            <person name="Leigh J.A."/>
            <person name="Li W."/>
            <person name="Liu J."/>
            <person name="Mukhopadhyay B."/>
            <person name="Reeve J.N."/>
            <person name="Smith K."/>
            <person name="Springer T.A."/>
            <person name="Umayam L.A."/>
            <person name="White O."/>
            <person name="White R.H."/>
            <person name="de Macario E.C."/>
            <person name="Ferry J.G."/>
            <person name="Jarrell K.F."/>
            <person name="Jing H."/>
            <person name="Macario A.J.L."/>
            <person name="Paulsen I.T."/>
            <person name="Pritchett M."/>
            <person name="Sowers K.R."/>
            <person name="Swanson R.V."/>
            <person name="Zinder S.H."/>
            <person name="Lander E."/>
            <person name="Metcalf W.W."/>
            <person name="Birren B."/>
        </authorList>
    </citation>
    <scope>NUCLEOTIDE SEQUENCE [LARGE SCALE GENOMIC DNA]</scope>
    <source>
        <strain>ATCC 35395 / DSM 2834 / JCM 12185 / C2A</strain>
    </source>
</reference>
<dbReference type="EC" id="2.1.1.247"/>
<dbReference type="EMBL" id="AE010299">
    <property type="protein sequence ID" value="AAM03599.1"/>
    <property type="molecule type" value="Genomic_DNA"/>
</dbReference>
<dbReference type="RefSeq" id="WP_011020204.1">
    <property type="nucleotide sequence ID" value="NC_003552.1"/>
</dbReference>
<dbReference type="SMR" id="P58869"/>
<dbReference type="STRING" id="188937.MA_0146"/>
<dbReference type="EnsemblBacteria" id="AAM03599">
    <property type="protein sequence ID" value="AAM03599"/>
    <property type="gene ID" value="MA_0146"/>
</dbReference>
<dbReference type="GeneID" id="1472038"/>
<dbReference type="KEGG" id="mac:MA_0146"/>
<dbReference type="HOGENOM" id="CLU_040933_2_1_2"/>
<dbReference type="InParanoid" id="P58869"/>
<dbReference type="OrthoDB" id="124836at2157"/>
<dbReference type="PhylomeDB" id="P58869"/>
<dbReference type="UniPathway" id="UPA00650"/>
<dbReference type="Proteomes" id="UP000002487">
    <property type="component" value="Chromosome"/>
</dbReference>
<dbReference type="GO" id="GO:0043833">
    <property type="term" value="F:[methyl-Co(III) methylamine-specific corrinoid protein]:coenzyme M methyltransferase activity"/>
    <property type="evidence" value="ECO:0007669"/>
    <property type="project" value="UniProtKB-EC"/>
</dbReference>
<dbReference type="GO" id="GO:0043791">
    <property type="term" value="F:dimethylamine methyltransferase activity"/>
    <property type="evidence" value="ECO:0007669"/>
    <property type="project" value="InterPro"/>
</dbReference>
<dbReference type="GO" id="GO:0046872">
    <property type="term" value="F:metal ion binding"/>
    <property type="evidence" value="ECO:0007669"/>
    <property type="project" value="UniProtKB-KW"/>
</dbReference>
<dbReference type="GO" id="GO:0004853">
    <property type="term" value="F:uroporphyrinogen decarboxylase activity"/>
    <property type="evidence" value="ECO:0007669"/>
    <property type="project" value="InterPro"/>
</dbReference>
<dbReference type="GO" id="GO:2001129">
    <property type="term" value="P:methane biosynthetic process from dimethylamine"/>
    <property type="evidence" value="ECO:0007669"/>
    <property type="project" value="InterPro"/>
</dbReference>
<dbReference type="GO" id="GO:0032259">
    <property type="term" value="P:methylation"/>
    <property type="evidence" value="ECO:0007669"/>
    <property type="project" value="UniProtKB-KW"/>
</dbReference>
<dbReference type="GO" id="GO:0006730">
    <property type="term" value="P:one-carbon metabolic process"/>
    <property type="evidence" value="ECO:0007669"/>
    <property type="project" value="InterPro"/>
</dbReference>
<dbReference type="GO" id="GO:0006779">
    <property type="term" value="P:porphyrin-containing compound biosynthetic process"/>
    <property type="evidence" value="ECO:0007669"/>
    <property type="project" value="InterPro"/>
</dbReference>
<dbReference type="CDD" id="cd03307">
    <property type="entry name" value="Mta_CmuA_like"/>
    <property type="match status" value="1"/>
</dbReference>
<dbReference type="Gene3D" id="3.20.20.210">
    <property type="match status" value="1"/>
</dbReference>
<dbReference type="InterPro" id="IPR052024">
    <property type="entry name" value="Methanogen_methyltrans"/>
</dbReference>
<dbReference type="InterPro" id="IPR048096">
    <property type="entry name" value="Methylcob_mtaseMtbA"/>
</dbReference>
<dbReference type="InterPro" id="IPR006360">
    <property type="entry name" value="Mtase_MtaA_CmuA"/>
</dbReference>
<dbReference type="InterPro" id="IPR038071">
    <property type="entry name" value="UROD/MetE-like_sf"/>
</dbReference>
<dbReference type="InterPro" id="IPR000257">
    <property type="entry name" value="Uroporphyrinogen_deCOase"/>
</dbReference>
<dbReference type="NCBIfam" id="NF041608">
    <property type="entry name" value="methylcob_mtaseMtbA"/>
    <property type="match status" value="1"/>
</dbReference>
<dbReference type="NCBIfam" id="TIGR01463">
    <property type="entry name" value="mtaA_cmuA"/>
    <property type="match status" value="1"/>
</dbReference>
<dbReference type="NCBIfam" id="NF004889">
    <property type="entry name" value="PRK06252.1"/>
    <property type="match status" value="1"/>
</dbReference>
<dbReference type="PANTHER" id="PTHR47099">
    <property type="entry name" value="METHYLCOBAMIDE:COM METHYLTRANSFERASE MTBA"/>
    <property type="match status" value="1"/>
</dbReference>
<dbReference type="PANTHER" id="PTHR47099:SF1">
    <property type="entry name" value="METHYLCOBAMIDE:COM METHYLTRANSFERASE MTBA"/>
    <property type="match status" value="1"/>
</dbReference>
<dbReference type="Pfam" id="PF01208">
    <property type="entry name" value="URO-D"/>
    <property type="match status" value="1"/>
</dbReference>
<dbReference type="SUPFAM" id="SSF51726">
    <property type="entry name" value="UROD/MetE-like"/>
    <property type="match status" value="1"/>
</dbReference>
<protein>
    <recommendedName>
        <fullName>Methylcobamide:CoM methyltransferase MtbA</fullName>
        <ecNumber>2.1.1.247</ecNumber>
    </recommendedName>
    <alternativeName>
        <fullName>MT2-A</fullName>
    </alternativeName>
    <alternativeName>
        <fullName>Methylcobamide:CoM methyltransferase II isozyme A</fullName>
    </alternativeName>
    <alternativeName>
        <fullName>[Methyl-Co(III) methylamine-specific corrinoid protein]:coenzyme M</fullName>
    </alternativeName>
</protein>
<comment type="function">
    <text evidence="1">Methyltransferase involved in methanogenesis from methylamines methanol pathway. Catalyzes the transfer of the methyl group from the methylated corrinoid protein MtmC (MtmC1 or MtmC2) to coenzyme M, forming the substrate for coenzyme-B sulfoethylthiotransferase (By similarity).</text>
</comment>
<comment type="catalytic activity">
    <reaction>
        <text>methyl-Co(III)-[methylamine-specific corrinoid protein] + coenzyme M = Co(I)-[methylamine-specific corrinoid protein] + methyl-coenzyme M + H(+)</text>
        <dbReference type="Rhea" id="RHEA:18773"/>
        <dbReference type="Rhea" id="RHEA-COMP:11120"/>
        <dbReference type="Rhea" id="RHEA-COMP:11121"/>
        <dbReference type="ChEBI" id="CHEBI:15378"/>
        <dbReference type="ChEBI" id="CHEBI:58286"/>
        <dbReference type="ChEBI" id="CHEBI:58319"/>
        <dbReference type="ChEBI" id="CHEBI:85033"/>
        <dbReference type="ChEBI" id="CHEBI:85035"/>
        <dbReference type="EC" id="2.1.1.247"/>
    </reaction>
</comment>
<comment type="cofactor">
    <cofactor evidence="1">
        <name>Zn(2+)</name>
        <dbReference type="ChEBI" id="CHEBI:29105"/>
    </cofactor>
</comment>
<comment type="pathway">
    <text>One-carbon metabolism; methanogenesis from methylated amine.</text>
</comment>
<comment type="similarity">
    <text evidence="3">Belongs to the uroporphyrinogen decarboxylase family. MtbA/MtaA subfamily.</text>
</comment>
<gene>
    <name type="primary">mtbA</name>
    <name type="ordered locus">MA_0146</name>
</gene>
<organism>
    <name type="scientific">Methanosarcina acetivorans (strain ATCC 35395 / DSM 2834 / JCM 12185 / C2A)</name>
    <dbReference type="NCBI Taxonomy" id="188937"/>
    <lineage>
        <taxon>Archaea</taxon>
        <taxon>Methanobacteriati</taxon>
        <taxon>Methanobacteriota</taxon>
        <taxon>Stenosarchaea group</taxon>
        <taxon>Methanomicrobia</taxon>
        <taxon>Methanosarcinales</taxon>
        <taxon>Methanosarcinaceae</taxon>
        <taxon>Methanosarcina</taxon>
    </lineage>
</organism>